<accession>Q498U3</accession>
<organism>
    <name type="scientific">Rattus norvegicus</name>
    <name type="common">Rat</name>
    <dbReference type="NCBI Taxonomy" id="10116"/>
    <lineage>
        <taxon>Eukaryota</taxon>
        <taxon>Metazoa</taxon>
        <taxon>Chordata</taxon>
        <taxon>Craniata</taxon>
        <taxon>Vertebrata</taxon>
        <taxon>Euteleostomi</taxon>
        <taxon>Mammalia</taxon>
        <taxon>Eutheria</taxon>
        <taxon>Euarchontoglires</taxon>
        <taxon>Glires</taxon>
        <taxon>Rodentia</taxon>
        <taxon>Myomorpha</taxon>
        <taxon>Muroidea</taxon>
        <taxon>Muridae</taxon>
        <taxon>Murinae</taxon>
        <taxon>Rattus</taxon>
    </lineage>
</organism>
<reference key="1">
    <citation type="journal article" date="2004" name="Nature">
        <title>Genome sequence of the Brown Norway rat yields insights into mammalian evolution.</title>
        <authorList>
            <person name="Gibbs R.A."/>
            <person name="Weinstock G.M."/>
            <person name="Metzker M.L."/>
            <person name="Muzny D.M."/>
            <person name="Sodergren E.J."/>
            <person name="Scherer S."/>
            <person name="Scott G."/>
            <person name="Steffen D."/>
            <person name="Worley K.C."/>
            <person name="Burch P.E."/>
            <person name="Okwuonu G."/>
            <person name="Hines S."/>
            <person name="Lewis L."/>
            <person name="Deramo C."/>
            <person name="Delgado O."/>
            <person name="Dugan-Rocha S."/>
            <person name="Miner G."/>
            <person name="Morgan M."/>
            <person name="Hawes A."/>
            <person name="Gill R."/>
            <person name="Holt R.A."/>
            <person name="Adams M.D."/>
            <person name="Amanatides P.G."/>
            <person name="Baden-Tillson H."/>
            <person name="Barnstead M."/>
            <person name="Chin S."/>
            <person name="Evans C.A."/>
            <person name="Ferriera S."/>
            <person name="Fosler C."/>
            <person name="Glodek A."/>
            <person name="Gu Z."/>
            <person name="Jennings D."/>
            <person name="Kraft C.L."/>
            <person name="Nguyen T."/>
            <person name="Pfannkoch C.M."/>
            <person name="Sitter C."/>
            <person name="Sutton G.G."/>
            <person name="Venter J.C."/>
            <person name="Woodage T."/>
            <person name="Smith D."/>
            <person name="Lee H.-M."/>
            <person name="Gustafson E."/>
            <person name="Cahill P."/>
            <person name="Kana A."/>
            <person name="Doucette-Stamm L."/>
            <person name="Weinstock K."/>
            <person name="Fechtel K."/>
            <person name="Weiss R.B."/>
            <person name="Dunn D.M."/>
            <person name="Green E.D."/>
            <person name="Blakesley R.W."/>
            <person name="Bouffard G.G."/>
            <person name="De Jong P.J."/>
            <person name="Osoegawa K."/>
            <person name="Zhu B."/>
            <person name="Marra M."/>
            <person name="Schein J."/>
            <person name="Bosdet I."/>
            <person name="Fjell C."/>
            <person name="Jones S."/>
            <person name="Krzywinski M."/>
            <person name="Mathewson C."/>
            <person name="Siddiqui A."/>
            <person name="Wye N."/>
            <person name="McPherson J."/>
            <person name="Zhao S."/>
            <person name="Fraser C.M."/>
            <person name="Shetty J."/>
            <person name="Shatsman S."/>
            <person name="Geer K."/>
            <person name="Chen Y."/>
            <person name="Abramzon S."/>
            <person name="Nierman W.C."/>
            <person name="Havlak P.H."/>
            <person name="Chen R."/>
            <person name="Durbin K.J."/>
            <person name="Egan A."/>
            <person name="Ren Y."/>
            <person name="Song X.-Z."/>
            <person name="Li B."/>
            <person name="Liu Y."/>
            <person name="Qin X."/>
            <person name="Cawley S."/>
            <person name="Cooney A.J."/>
            <person name="D'Souza L.M."/>
            <person name="Martin K."/>
            <person name="Wu J.Q."/>
            <person name="Gonzalez-Garay M.L."/>
            <person name="Jackson A.R."/>
            <person name="Kalafus K.J."/>
            <person name="McLeod M.P."/>
            <person name="Milosavljevic A."/>
            <person name="Virk D."/>
            <person name="Volkov A."/>
            <person name="Wheeler D.A."/>
            <person name="Zhang Z."/>
            <person name="Bailey J.A."/>
            <person name="Eichler E.E."/>
            <person name="Tuzun E."/>
            <person name="Birney E."/>
            <person name="Mongin E."/>
            <person name="Ureta-Vidal A."/>
            <person name="Woodwark C."/>
            <person name="Zdobnov E."/>
            <person name="Bork P."/>
            <person name="Suyama M."/>
            <person name="Torrents D."/>
            <person name="Alexandersson M."/>
            <person name="Trask B.J."/>
            <person name="Young J.M."/>
            <person name="Huang H."/>
            <person name="Wang H."/>
            <person name="Xing H."/>
            <person name="Daniels S."/>
            <person name="Gietzen D."/>
            <person name="Schmidt J."/>
            <person name="Stevens K."/>
            <person name="Vitt U."/>
            <person name="Wingrove J."/>
            <person name="Camara F."/>
            <person name="Mar Alba M."/>
            <person name="Abril J.F."/>
            <person name="Guigo R."/>
            <person name="Smit A."/>
            <person name="Dubchak I."/>
            <person name="Rubin E.M."/>
            <person name="Couronne O."/>
            <person name="Poliakov A."/>
            <person name="Huebner N."/>
            <person name="Ganten D."/>
            <person name="Goesele C."/>
            <person name="Hummel O."/>
            <person name="Kreitler T."/>
            <person name="Lee Y.-A."/>
            <person name="Monti J."/>
            <person name="Schulz H."/>
            <person name="Zimdahl H."/>
            <person name="Himmelbauer H."/>
            <person name="Lehrach H."/>
            <person name="Jacob H.J."/>
            <person name="Bromberg S."/>
            <person name="Gullings-Handley J."/>
            <person name="Jensen-Seaman M.I."/>
            <person name="Kwitek A.E."/>
            <person name="Lazar J."/>
            <person name="Pasko D."/>
            <person name="Tonellato P.J."/>
            <person name="Twigger S."/>
            <person name="Ponting C.P."/>
            <person name="Duarte J.M."/>
            <person name="Rice S."/>
            <person name="Goodstadt L."/>
            <person name="Beatson S.A."/>
            <person name="Emes R.D."/>
            <person name="Winter E.E."/>
            <person name="Webber C."/>
            <person name="Brandt P."/>
            <person name="Nyakatura G."/>
            <person name="Adetobi M."/>
            <person name="Chiaromonte F."/>
            <person name="Elnitski L."/>
            <person name="Eswara P."/>
            <person name="Hardison R.C."/>
            <person name="Hou M."/>
            <person name="Kolbe D."/>
            <person name="Makova K."/>
            <person name="Miller W."/>
            <person name="Nekrutenko A."/>
            <person name="Riemer C."/>
            <person name="Schwartz S."/>
            <person name="Taylor J."/>
            <person name="Yang S."/>
            <person name="Zhang Y."/>
            <person name="Lindpaintner K."/>
            <person name="Andrews T.D."/>
            <person name="Caccamo M."/>
            <person name="Clamp M."/>
            <person name="Clarke L."/>
            <person name="Curwen V."/>
            <person name="Durbin R.M."/>
            <person name="Eyras E."/>
            <person name="Searle S.M."/>
            <person name="Cooper G.M."/>
            <person name="Batzoglou S."/>
            <person name="Brudno M."/>
            <person name="Sidow A."/>
            <person name="Stone E.A."/>
            <person name="Payseur B.A."/>
            <person name="Bourque G."/>
            <person name="Lopez-Otin C."/>
            <person name="Puente X.S."/>
            <person name="Chakrabarti K."/>
            <person name="Chatterji S."/>
            <person name="Dewey C."/>
            <person name="Pachter L."/>
            <person name="Bray N."/>
            <person name="Yap V.B."/>
            <person name="Caspi A."/>
            <person name="Tesler G."/>
            <person name="Pevzner P.A."/>
            <person name="Haussler D."/>
            <person name="Roskin K.M."/>
            <person name="Baertsch R."/>
            <person name="Clawson H."/>
            <person name="Furey T.S."/>
            <person name="Hinrichs A.S."/>
            <person name="Karolchik D."/>
            <person name="Kent W.J."/>
            <person name="Rosenbloom K.R."/>
            <person name="Trumbower H."/>
            <person name="Weirauch M."/>
            <person name="Cooper D.N."/>
            <person name="Stenson P.D."/>
            <person name="Ma B."/>
            <person name="Brent M."/>
            <person name="Arumugam M."/>
            <person name="Shteynberg D."/>
            <person name="Copley R.R."/>
            <person name="Taylor M.S."/>
            <person name="Riethman H."/>
            <person name="Mudunuri U."/>
            <person name="Peterson J."/>
            <person name="Guyer M."/>
            <person name="Felsenfeld A."/>
            <person name="Old S."/>
            <person name="Mockrin S."/>
            <person name="Collins F.S."/>
        </authorList>
    </citation>
    <scope>NUCLEOTIDE SEQUENCE [LARGE SCALE GENOMIC DNA]</scope>
    <source>
        <strain>Brown Norway</strain>
    </source>
</reference>
<reference key="2">
    <citation type="journal article" date="2004" name="Genome Res.">
        <title>The status, quality, and expansion of the NIH full-length cDNA project: the Mammalian Gene Collection (MGC).</title>
        <authorList>
            <consortium name="The MGC Project Team"/>
        </authorList>
    </citation>
    <scope>NUCLEOTIDE SEQUENCE [LARGE SCALE MRNA] (ISOFORM 2)</scope>
    <source>
        <tissue>Liver</tissue>
    </source>
</reference>
<reference key="3">
    <citation type="journal article" date="2006" name="Genomics">
        <title>Fourteen novel human members of mitochondrial solute carrier family 25 (SLC25) widely expressed in the central nervous system.</title>
        <authorList>
            <person name="Haitina T."/>
            <person name="Lindblom J."/>
            <person name="Renstroem T."/>
            <person name="Fredriksson R."/>
        </authorList>
    </citation>
    <scope>TISSUE SPECIFICITY</scope>
</reference>
<comment type="function">
    <text evidence="1 2">Probable mitochondrial transporter required for glutathione import into mitochondria. Glutathione, which plays key roles in oxidative metabolism, is produced exclusively in the cytosol and is imported in many organelles (By similarity). Mitochondrial glutathione is required for the activity and stability of proteins containing iron-sulfur clusters, as well as erythropoiesis (By similarity).</text>
</comment>
<comment type="catalytic activity">
    <reaction evidence="2">
        <text>glutathione(in) = glutathione(out)</text>
        <dbReference type="Rhea" id="RHEA:74819"/>
        <dbReference type="ChEBI" id="CHEBI:57925"/>
    </reaction>
</comment>
<comment type="subcellular location">
    <subcellularLocation>
        <location evidence="3">Mitochondrion inner membrane</location>
        <topology evidence="4">Multi-pass membrane protein</topology>
    </subcellularLocation>
</comment>
<comment type="alternative products">
    <event type="alternative splicing"/>
    <isoform>
        <id>Q498U3-1</id>
        <name>1</name>
        <sequence type="displayed"/>
    </isoform>
    <isoform>
        <id>Q498U3-2</id>
        <name>2</name>
        <sequence type="described" ref="VSP_026244"/>
    </isoform>
</comment>
<comment type="tissue specificity">
    <text evidence="5">Widely expressed at low level.</text>
</comment>
<comment type="similarity">
    <text evidence="7">Belongs to the mitochondrial carrier (TC 2.A.29) family.</text>
</comment>
<name>S2540_RAT</name>
<keyword id="KW-0025">Alternative splicing</keyword>
<keyword id="KW-0472">Membrane</keyword>
<keyword id="KW-0496">Mitochondrion</keyword>
<keyword id="KW-0999">Mitochondrion inner membrane</keyword>
<keyword id="KW-1185">Reference proteome</keyword>
<keyword id="KW-0677">Repeat</keyword>
<keyword id="KW-0812">Transmembrane</keyword>
<keyword id="KW-1133">Transmembrane helix</keyword>
<keyword id="KW-0813">Transport</keyword>
<protein>
    <recommendedName>
        <fullName evidence="7">Mitochondrial glutathione transporter SLC25A40</fullName>
    </recommendedName>
    <alternativeName>
        <fullName evidence="7">Solute carrier family 25 member 40</fullName>
    </alternativeName>
</protein>
<gene>
    <name evidence="8" type="primary">Slc25a40</name>
</gene>
<dbReference type="EMBL" id="AABR03033761">
    <property type="status" value="NOT_ANNOTATED_CDS"/>
    <property type="molecule type" value="Genomic_DNA"/>
</dbReference>
<dbReference type="EMBL" id="BC100071">
    <property type="protein sequence ID" value="AAI00072.1"/>
    <property type="molecule type" value="mRNA"/>
</dbReference>
<dbReference type="RefSeq" id="NP_001032263.1">
    <property type="nucleotide sequence ID" value="NM_001037186.1"/>
</dbReference>
<dbReference type="RefSeq" id="NP_001380639.1">
    <molecule id="Q498U3-1"/>
    <property type="nucleotide sequence ID" value="NM_001393710.1"/>
</dbReference>
<dbReference type="RefSeq" id="XP_063141786.1">
    <molecule id="Q498U3-2"/>
    <property type="nucleotide sequence ID" value="XM_063285716.1"/>
</dbReference>
<dbReference type="RefSeq" id="XP_063141787.1">
    <molecule id="Q498U3-2"/>
    <property type="nucleotide sequence ID" value="XM_063285717.1"/>
</dbReference>
<dbReference type="RefSeq" id="XP_063141788.1">
    <molecule id="Q498U3-1"/>
    <property type="nucleotide sequence ID" value="XM_063285718.1"/>
</dbReference>
<dbReference type="SMR" id="Q498U3"/>
<dbReference type="FunCoup" id="Q498U3">
    <property type="interactions" value="2228"/>
</dbReference>
<dbReference type="STRING" id="10116.ENSRNOP00000058058"/>
<dbReference type="PhosphoSitePlus" id="Q498U3"/>
<dbReference type="PaxDb" id="10116-ENSRNOP00000058058"/>
<dbReference type="Ensembl" id="ENSRNOT00000061342.6">
    <molecule id="Q498U3-2"/>
    <property type="protein sequence ID" value="ENSRNOP00000058058.3"/>
    <property type="gene ID" value="ENSRNOG00000022837.8"/>
</dbReference>
<dbReference type="GeneID" id="296813"/>
<dbReference type="AGR" id="RGD:1308774"/>
<dbReference type="RGD" id="1308774">
    <property type="gene designation" value="Slc25a40"/>
</dbReference>
<dbReference type="VEuPathDB" id="HostDB:ENSRNOG00000022837"/>
<dbReference type="eggNOG" id="KOG0761">
    <property type="taxonomic scope" value="Eukaryota"/>
</dbReference>
<dbReference type="GeneTree" id="ENSGT00940000160249"/>
<dbReference type="HOGENOM" id="CLU_015166_0_0_1"/>
<dbReference type="InParanoid" id="Q498U3"/>
<dbReference type="OMA" id="FVSPIEM"/>
<dbReference type="PhylomeDB" id="Q498U3"/>
<dbReference type="PRO" id="PR:Q498U3"/>
<dbReference type="Proteomes" id="UP000002494">
    <property type="component" value="Chromosome 4"/>
</dbReference>
<dbReference type="Bgee" id="ENSRNOG00000022837">
    <property type="expression patterns" value="Expressed in duodenum and 19 other cell types or tissues"/>
</dbReference>
<dbReference type="GO" id="GO:0005743">
    <property type="term" value="C:mitochondrial inner membrane"/>
    <property type="evidence" value="ECO:0007669"/>
    <property type="project" value="UniProtKB-SubCell"/>
</dbReference>
<dbReference type="GO" id="GO:0005739">
    <property type="term" value="C:mitochondrion"/>
    <property type="evidence" value="ECO:0000318"/>
    <property type="project" value="GO_Central"/>
</dbReference>
<dbReference type="GO" id="GO:0034634">
    <property type="term" value="F:glutathione transmembrane transporter activity"/>
    <property type="evidence" value="ECO:0000250"/>
    <property type="project" value="UniProtKB"/>
</dbReference>
<dbReference type="GO" id="GO:0048821">
    <property type="term" value="P:erythrocyte development"/>
    <property type="evidence" value="ECO:0000266"/>
    <property type="project" value="RGD"/>
</dbReference>
<dbReference type="GO" id="GO:0170036">
    <property type="term" value="P:import into the mitochondrion"/>
    <property type="evidence" value="ECO:0000318"/>
    <property type="project" value="GO_Central"/>
</dbReference>
<dbReference type="FunFam" id="1.50.40.10:FF:000141">
    <property type="entry name" value="Mitochondrial carrier protein MTM1"/>
    <property type="match status" value="1"/>
</dbReference>
<dbReference type="Gene3D" id="1.50.40.10">
    <property type="entry name" value="Mitochondrial carrier domain"/>
    <property type="match status" value="1"/>
</dbReference>
<dbReference type="InterPro" id="IPR002067">
    <property type="entry name" value="Mit_carrier"/>
</dbReference>
<dbReference type="InterPro" id="IPR018108">
    <property type="entry name" value="Mitochondrial_sb/sol_carrier"/>
</dbReference>
<dbReference type="InterPro" id="IPR023395">
    <property type="entry name" value="Mt_carrier_dom_sf"/>
</dbReference>
<dbReference type="InterPro" id="IPR045315">
    <property type="entry name" value="Mtm1-like"/>
</dbReference>
<dbReference type="PANTHER" id="PTHR45760">
    <property type="entry name" value="FI19922P1-RELATED"/>
    <property type="match status" value="1"/>
</dbReference>
<dbReference type="PANTHER" id="PTHR45760:SF5">
    <property type="entry name" value="MITOCHONDRIAL GLUTATHIONE TRANSPORTER SLC25A40-RELATED"/>
    <property type="match status" value="1"/>
</dbReference>
<dbReference type="Pfam" id="PF00153">
    <property type="entry name" value="Mito_carr"/>
    <property type="match status" value="3"/>
</dbReference>
<dbReference type="PRINTS" id="PR00926">
    <property type="entry name" value="MITOCARRIER"/>
</dbReference>
<dbReference type="SUPFAM" id="SSF103506">
    <property type="entry name" value="Mitochondrial carrier"/>
    <property type="match status" value="1"/>
</dbReference>
<dbReference type="PROSITE" id="PS50920">
    <property type="entry name" value="SOLCAR"/>
    <property type="match status" value="3"/>
</dbReference>
<feature type="chain" id="PRO_0000291811" description="Mitochondrial glutathione transporter SLC25A40">
    <location>
        <begin position="1"/>
        <end position="337"/>
    </location>
</feature>
<feature type="transmembrane region" description="Helical; Name=1" evidence="4">
    <location>
        <begin position="20"/>
        <end position="40"/>
    </location>
</feature>
<feature type="transmembrane region" description="Helical; Name=2" evidence="4">
    <location>
        <begin position="104"/>
        <end position="124"/>
    </location>
</feature>
<feature type="transmembrane region" description="Helical; Name=3" evidence="4">
    <location>
        <begin position="146"/>
        <end position="166"/>
    </location>
</feature>
<feature type="transmembrane region" description="Helical; Name=4" evidence="4">
    <location>
        <begin position="200"/>
        <end position="221"/>
    </location>
</feature>
<feature type="transmembrane region" description="Helical; Name=5" evidence="4">
    <location>
        <begin position="240"/>
        <end position="260"/>
    </location>
</feature>
<feature type="transmembrane region" description="Helical; Name=6" evidence="4">
    <location>
        <begin position="299"/>
        <end position="319"/>
    </location>
</feature>
<feature type="repeat" description="Solcar 1">
    <location>
        <begin position="14"/>
        <end position="132"/>
    </location>
</feature>
<feature type="repeat" description="Solcar 2">
    <location>
        <begin position="140"/>
        <end position="224"/>
    </location>
</feature>
<feature type="repeat" description="Solcar 3">
    <location>
        <begin position="234"/>
        <end position="328"/>
    </location>
</feature>
<feature type="splice variant" id="VSP_026244" description="In isoform 2." evidence="6">
    <original>LIPRLVKIVPACAIMISSYELGKGFFQQQNVESR</original>
    <variation>ICLIKLSRLERCSAAKSIGCSSRGSRLISQHPPGNLDLSITPVPGNLAPSPRHTCTQCAQNIVK</variation>
    <location>
        <begin position="304"/>
        <end position="337"/>
    </location>
</feature>
<sequence>MEPETEGPPPTIQVTPLQQMMASCAGAVVTSLMVTPLDVVKIRLQAQNNPFPKGKCFLYSNGLMDHICICEEESKKAWYKKPGNFHGTLDAFLKIVRNEGIKSLWSGLPPTLVMAVPATVIYFTCYEQLSTFLKTKLGENETRIPIVAGIVARFGAVTMISPLELIRTKMQSKTFSYKELYQIVSMKVSEDGWISLWKGWAPTILRDVPFSAMYWYNYENLRRWLCEKSDLYESTFMINFTAGALSGSFAAVATLPFDVVKTQKQTQLWTHEYCKFPEPLDMSTWSIMKNIVADRGFSGLFTGLIPRLVKIVPACAIMISSYELGKGFFQQQNVESR</sequence>
<proteinExistence type="evidence at transcript level"/>
<evidence type="ECO:0000250" key="1">
    <source>
        <dbReference type="UniProtKB" id="Q8BGP6"/>
    </source>
</evidence>
<evidence type="ECO:0000250" key="2">
    <source>
        <dbReference type="UniProtKB" id="Q8TBP6"/>
    </source>
</evidence>
<evidence type="ECO:0000250" key="3">
    <source>
        <dbReference type="UniProtKB" id="Q9BZJ4"/>
    </source>
</evidence>
<evidence type="ECO:0000255" key="4"/>
<evidence type="ECO:0000269" key="5">
    <source>
    </source>
</evidence>
<evidence type="ECO:0000303" key="6">
    <source>
    </source>
</evidence>
<evidence type="ECO:0000305" key="7"/>
<evidence type="ECO:0000312" key="8">
    <source>
        <dbReference type="RGD" id="1308774"/>
    </source>
</evidence>